<organism>
    <name type="scientific">Escherichia coli O7:K1 (strain IAI39 / ExPEC)</name>
    <dbReference type="NCBI Taxonomy" id="585057"/>
    <lineage>
        <taxon>Bacteria</taxon>
        <taxon>Pseudomonadati</taxon>
        <taxon>Pseudomonadota</taxon>
        <taxon>Gammaproteobacteria</taxon>
        <taxon>Enterobacterales</taxon>
        <taxon>Enterobacteriaceae</taxon>
        <taxon>Escherichia</taxon>
    </lineage>
</organism>
<feature type="chain" id="PRO_1000146734" description="p-hydroxybenzoic acid efflux pump subunit AaeB">
    <location>
        <begin position="1"/>
        <end position="655"/>
    </location>
</feature>
<feature type="transmembrane region" description="Helical" evidence="1">
    <location>
        <begin position="13"/>
        <end position="33"/>
    </location>
</feature>
<feature type="transmembrane region" description="Helical" evidence="1">
    <location>
        <begin position="38"/>
        <end position="58"/>
    </location>
</feature>
<feature type="transmembrane region" description="Helical" evidence="1">
    <location>
        <begin position="69"/>
        <end position="89"/>
    </location>
</feature>
<feature type="transmembrane region" description="Helical" evidence="1">
    <location>
        <begin position="93"/>
        <end position="113"/>
    </location>
</feature>
<feature type="transmembrane region" description="Helical" evidence="1">
    <location>
        <begin position="121"/>
        <end position="141"/>
    </location>
</feature>
<feature type="transmembrane region" description="Helical" evidence="1">
    <location>
        <begin position="152"/>
        <end position="172"/>
    </location>
</feature>
<feature type="transmembrane region" description="Helical" evidence="1">
    <location>
        <begin position="370"/>
        <end position="390"/>
    </location>
</feature>
<feature type="transmembrane region" description="Helical" evidence="1">
    <location>
        <begin position="407"/>
        <end position="427"/>
    </location>
</feature>
<feature type="transmembrane region" description="Helical" evidence="1">
    <location>
        <begin position="431"/>
        <end position="451"/>
    </location>
</feature>
<feature type="transmembrane region" description="Helical" evidence="1">
    <location>
        <begin position="459"/>
        <end position="479"/>
    </location>
</feature>
<feature type="transmembrane region" description="Helical" evidence="1">
    <location>
        <begin position="482"/>
        <end position="502"/>
    </location>
</feature>
<sequence>MGIFSIANQHIRFAVKLATAIVLALFVGFHFQLETPRWAVLTAAIVAAGPAFAAGGEPYSGAIRYRGFLRIIGTFIGCIAGLVIIIAMIRAPLLMILVCCIWAGFCTWISSLVRIENSYAWGLAGYTALIIVITIQPEPLLTPQFAVERCSEIVIGIVCAIMADLLFSPRSIKQEVDRELESLLVAQYQLMQLCIKHGDGEVVDKAWGDLVRRTTALQGMRSNLNMESSRWARANRRLKAINTLSLTLITQSCETYLIQNTRPELITDTFREFFDTPVETAQDVHKQLKRLRRVIAWTGERETPVTIYSWVAAATRYQLLKRGVISNTKINATEEEILQGEPEVKVESAERHHAMVNFWRTTLSCILGTLFWLWTGWTSGSGAMVMIAVVTSLAMRLPNPRMVAIDFIYGTLAALPLGLLYFLVIIPNTQQSMLLLCISLAVLGFFLGIEVQKRRLGSMGALASTINIIVLDNPMTFHFNQFLDSALGQIVGCVLAFTVILLVRDKSRDRTGRVLLNQFVSAAVSAMTTNVARRKENHLPALYQQLFLLMNKFPGDLPKFRLALTMIIAHQRLRDAPIPVNEDLSAFHRQMRRTADHVISARSDDKRRRYFGQLLEELEIYQEKLRIWQAPPQVTEPVHRLTGMLHKYQHALTDS</sequence>
<gene>
    <name evidence="1" type="primary">aaeB</name>
    <name type="ordered locus">ECIAI39_3731</name>
</gene>
<proteinExistence type="inferred from homology"/>
<dbReference type="EMBL" id="CU928164">
    <property type="protein sequence ID" value="CAR19847.1"/>
    <property type="molecule type" value="Genomic_DNA"/>
</dbReference>
<dbReference type="RefSeq" id="WP_000510945.1">
    <property type="nucleotide sequence ID" value="NC_011750.1"/>
</dbReference>
<dbReference type="RefSeq" id="YP_002409634.1">
    <property type="nucleotide sequence ID" value="NC_011750.1"/>
</dbReference>
<dbReference type="SMR" id="B7NLF8"/>
<dbReference type="STRING" id="585057.ECIAI39_3731"/>
<dbReference type="KEGG" id="ect:ECIAI39_3731"/>
<dbReference type="PATRIC" id="fig|585057.6.peg.3867"/>
<dbReference type="HOGENOM" id="CLU_027647_0_0_6"/>
<dbReference type="Proteomes" id="UP000000749">
    <property type="component" value="Chromosome"/>
</dbReference>
<dbReference type="GO" id="GO:0005886">
    <property type="term" value="C:plasma membrane"/>
    <property type="evidence" value="ECO:0007669"/>
    <property type="project" value="UniProtKB-SubCell"/>
</dbReference>
<dbReference type="GO" id="GO:0022857">
    <property type="term" value="F:transmembrane transporter activity"/>
    <property type="evidence" value="ECO:0007669"/>
    <property type="project" value="UniProtKB-UniRule"/>
</dbReference>
<dbReference type="GO" id="GO:0046942">
    <property type="term" value="P:carboxylic acid transport"/>
    <property type="evidence" value="ECO:0007669"/>
    <property type="project" value="InterPro"/>
</dbReference>
<dbReference type="HAMAP" id="MF_01545">
    <property type="entry name" value="AaeB"/>
    <property type="match status" value="1"/>
</dbReference>
<dbReference type="InterPro" id="IPR006726">
    <property type="entry name" value="PHBA_efflux_AaeB/fusaric-R"/>
</dbReference>
<dbReference type="InterPro" id="IPR023706">
    <property type="entry name" value="PHBA_efflux_pump_AaeB"/>
</dbReference>
<dbReference type="NCBIfam" id="NF007916">
    <property type="entry name" value="PRK10631.1"/>
    <property type="match status" value="1"/>
</dbReference>
<dbReference type="PANTHER" id="PTHR30509:SF9">
    <property type="entry name" value="MULTIDRUG RESISTANCE PROTEIN MDTO"/>
    <property type="match status" value="1"/>
</dbReference>
<dbReference type="PANTHER" id="PTHR30509">
    <property type="entry name" value="P-HYDROXYBENZOIC ACID EFFLUX PUMP SUBUNIT-RELATED"/>
    <property type="match status" value="1"/>
</dbReference>
<dbReference type="Pfam" id="PF04632">
    <property type="entry name" value="FUSC"/>
    <property type="match status" value="1"/>
</dbReference>
<accession>B7NLF8</accession>
<evidence type="ECO:0000255" key="1">
    <source>
        <dbReference type="HAMAP-Rule" id="MF_01545"/>
    </source>
</evidence>
<protein>
    <recommendedName>
        <fullName evidence="1">p-hydroxybenzoic acid efflux pump subunit AaeB</fullName>
        <shortName evidence="1">pHBA efflux pump protein B</shortName>
    </recommendedName>
</protein>
<name>AAEB_ECO7I</name>
<reference key="1">
    <citation type="journal article" date="2009" name="PLoS Genet.">
        <title>Organised genome dynamics in the Escherichia coli species results in highly diverse adaptive paths.</title>
        <authorList>
            <person name="Touchon M."/>
            <person name="Hoede C."/>
            <person name="Tenaillon O."/>
            <person name="Barbe V."/>
            <person name="Baeriswyl S."/>
            <person name="Bidet P."/>
            <person name="Bingen E."/>
            <person name="Bonacorsi S."/>
            <person name="Bouchier C."/>
            <person name="Bouvet O."/>
            <person name="Calteau A."/>
            <person name="Chiapello H."/>
            <person name="Clermont O."/>
            <person name="Cruveiller S."/>
            <person name="Danchin A."/>
            <person name="Diard M."/>
            <person name="Dossat C."/>
            <person name="Karoui M.E."/>
            <person name="Frapy E."/>
            <person name="Garry L."/>
            <person name="Ghigo J.M."/>
            <person name="Gilles A.M."/>
            <person name="Johnson J."/>
            <person name="Le Bouguenec C."/>
            <person name="Lescat M."/>
            <person name="Mangenot S."/>
            <person name="Martinez-Jehanne V."/>
            <person name="Matic I."/>
            <person name="Nassif X."/>
            <person name="Oztas S."/>
            <person name="Petit M.A."/>
            <person name="Pichon C."/>
            <person name="Rouy Z."/>
            <person name="Ruf C.S."/>
            <person name="Schneider D."/>
            <person name="Tourret J."/>
            <person name="Vacherie B."/>
            <person name="Vallenet D."/>
            <person name="Medigue C."/>
            <person name="Rocha E.P.C."/>
            <person name="Denamur E."/>
        </authorList>
    </citation>
    <scope>NUCLEOTIDE SEQUENCE [LARGE SCALE GENOMIC DNA]</scope>
    <source>
        <strain>IAI39 / ExPEC</strain>
    </source>
</reference>
<comment type="function">
    <text evidence="1">Forms an efflux pump with AaeA. Could function as a metabolic relief valve, allowing to eliminate certain compounds when they accumulate to high levels in the cell.</text>
</comment>
<comment type="subcellular location">
    <subcellularLocation>
        <location evidence="1">Cell inner membrane</location>
        <topology evidence="1">Multi-pass membrane protein</topology>
    </subcellularLocation>
</comment>
<comment type="induction">
    <text evidence="1">Positively coregulated with aaeA and aaeX by AaeR.</text>
</comment>
<comment type="similarity">
    <text evidence="1">Belongs to the aromatic acid exporter ArAE (TC 2.A.85) family.</text>
</comment>
<keyword id="KW-0997">Cell inner membrane</keyword>
<keyword id="KW-1003">Cell membrane</keyword>
<keyword id="KW-0472">Membrane</keyword>
<keyword id="KW-0812">Transmembrane</keyword>
<keyword id="KW-1133">Transmembrane helix</keyword>
<keyword id="KW-0813">Transport</keyword>